<evidence type="ECO:0000250" key="1"/>
<evidence type="ECO:0000255" key="2">
    <source>
        <dbReference type="PROSITE-ProRule" id="PRU00115"/>
    </source>
</evidence>
<evidence type="ECO:0000256" key="3">
    <source>
        <dbReference type="SAM" id="MobiDB-lite"/>
    </source>
</evidence>
<evidence type="ECO:0000269" key="4">
    <source>
    </source>
</evidence>
<evidence type="ECO:0000269" key="5">
    <source>
    </source>
</evidence>
<evidence type="ECO:0000269" key="6">
    <source>
    </source>
</evidence>
<evidence type="ECO:0000269" key="7">
    <source>
    </source>
</evidence>
<evidence type="ECO:0000269" key="8">
    <source>
    </source>
</evidence>
<evidence type="ECO:0000269" key="9">
    <source>
    </source>
</evidence>
<evidence type="ECO:0000303" key="10">
    <source>
    </source>
</evidence>
<evidence type="ECO:0000305" key="11"/>
<evidence type="ECO:0000305" key="12">
    <source>
    </source>
</evidence>
<evidence type="ECO:0007744" key="13">
    <source>
    </source>
</evidence>
<evidence type="ECO:0007744" key="14">
    <source>
    </source>
</evidence>
<evidence type="ECO:0007744" key="15">
    <source>
    </source>
</evidence>
<gene>
    <name type="primary">IPO8</name>
    <name type="synonym">RANBP8</name>
</gene>
<name>IPO8_HUMAN</name>
<organism>
    <name type="scientific">Homo sapiens</name>
    <name type="common">Human</name>
    <dbReference type="NCBI Taxonomy" id="9606"/>
    <lineage>
        <taxon>Eukaryota</taxon>
        <taxon>Metazoa</taxon>
        <taxon>Chordata</taxon>
        <taxon>Craniata</taxon>
        <taxon>Vertebrata</taxon>
        <taxon>Euteleostomi</taxon>
        <taxon>Mammalia</taxon>
        <taxon>Eutheria</taxon>
        <taxon>Euarchontoglires</taxon>
        <taxon>Primates</taxon>
        <taxon>Haplorrhini</taxon>
        <taxon>Catarrhini</taxon>
        <taxon>Hominidae</taxon>
        <taxon>Homo</taxon>
    </lineage>
</organism>
<reference key="1">
    <citation type="journal article" date="1997" name="J. Cell Biol.">
        <title>A novel class of RanGTP binding proteins.</title>
        <authorList>
            <person name="Goerlich D."/>
            <person name="Dabrowski M."/>
            <person name="Bischoff F.R."/>
            <person name="Kutay U."/>
            <person name="Bork P."/>
            <person name="Hartmann E."/>
            <person name="Prehn S."/>
            <person name="Izaurralde E."/>
        </authorList>
    </citation>
    <scope>NUCLEOTIDE SEQUENCE [MRNA] (ISOFORM 1)</scope>
    <scope>FUNCTION</scope>
    <scope>INTERACTION WITH KPNB1</scope>
    <scope>VARIANT PHE-6</scope>
</reference>
<reference key="2">
    <citation type="journal article" date="2004" name="Nat. Genet.">
        <title>Complete sequencing and characterization of 21,243 full-length human cDNAs.</title>
        <authorList>
            <person name="Ota T."/>
            <person name="Suzuki Y."/>
            <person name="Nishikawa T."/>
            <person name="Otsuki T."/>
            <person name="Sugiyama T."/>
            <person name="Irie R."/>
            <person name="Wakamatsu A."/>
            <person name="Hayashi K."/>
            <person name="Sato H."/>
            <person name="Nagai K."/>
            <person name="Kimura K."/>
            <person name="Makita H."/>
            <person name="Sekine M."/>
            <person name="Obayashi M."/>
            <person name="Nishi T."/>
            <person name="Shibahara T."/>
            <person name="Tanaka T."/>
            <person name="Ishii S."/>
            <person name="Yamamoto J."/>
            <person name="Saito K."/>
            <person name="Kawai Y."/>
            <person name="Isono Y."/>
            <person name="Nakamura Y."/>
            <person name="Nagahari K."/>
            <person name="Murakami K."/>
            <person name="Yasuda T."/>
            <person name="Iwayanagi T."/>
            <person name="Wagatsuma M."/>
            <person name="Shiratori A."/>
            <person name="Sudo H."/>
            <person name="Hosoiri T."/>
            <person name="Kaku Y."/>
            <person name="Kodaira H."/>
            <person name="Kondo H."/>
            <person name="Sugawara M."/>
            <person name="Takahashi M."/>
            <person name="Kanda K."/>
            <person name="Yokoi T."/>
            <person name="Furuya T."/>
            <person name="Kikkawa E."/>
            <person name="Omura Y."/>
            <person name="Abe K."/>
            <person name="Kamihara K."/>
            <person name="Katsuta N."/>
            <person name="Sato K."/>
            <person name="Tanikawa M."/>
            <person name="Yamazaki M."/>
            <person name="Ninomiya K."/>
            <person name="Ishibashi T."/>
            <person name="Yamashita H."/>
            <person name="Murakawa K."/>
            <person name="Fujimori K."/>
            <person name="Tanai H."/>
            <person name="Kimata M."/>
            <person name="Watanabe M."/>
            <person name="Hiraoka S."/>
            <person name="Chiba Y."/>
            <person name="Ishida S."/>
            <person name="Ono Y."/>
            <person name="Takiguchi S."/>
            <person name="Watanabe S."/>
            <person name="Yosida M."/>
            <person name="Hotuta T."/>
            <person name="Kusano J."/>
            <person name="Kanehori K."/>
            <person name="Takahashi-Fujii A."/>
            <person name="Hara H."/>
            <person name="Tanase T.-O."/>
            <person name="Nomura Y."/>
            <person name="Togiya S."/>
            <person name="Komai F."/>
            <person name="Hara R."/>
            <person name="Takeuchi K."/>
            <person name="Arita M."/>
            <person name="Imose N."/>
            <person name="Musashino K."/>
            <person name="Yuuki H."/>
            <person name="Oshima A."/>
            <person name="Sasaki N."/>
            <person name="Aotsuka S."/>
            <person name="Yoshikawa Y."/>
            <person name="Matsunawa H."/>
            <person name="Ichihara T."/>
            <person name="Shiohata N."/>
            <person name="Sano S."/>
            <person name="Moriya S."/>
            <person name="Momiyama H."/>
            <person name="Satoh N."/>
            <person name="Takami S."/>
            <person name="Terashima Y."/>
            <person name="Suzuki O."/>
            <person name="Nakagawa S."/>
            <person name="Senoh A."/>
            <person name="Mizoguchi H."/>
            <person name="Goto Y."/>
            <person name="Shimizu F."/>
            <person name="Wakebe H."/>
            <person name="Hishigaki H."/>
            <person name="Watanabe T."/>
            <person name="Sugiyama A."/>
            <person name="Takemoto M."/>
            <person name="Kawakami B."/>
            <person name="Yamazaki M."/>
            <person name="Watanabe K."/>
            <person name="Kumagai A."/>
            <person name="Itakura S."/>
            <person name="Fukuzumi Y."/>
            <person name="Fujimori Y."/>
            <person name="Komiyama M."/>
            <person name="Tashiro H."/>
            <person name="Tanigami A."/>
            <person name="Fujiwara T."/>
            <person name="Ono T."/>
            <person name="Yamada K."/>
            <person name="Fujii Y."/>
            <person name="Ozaki K."/>
            <person name="Hirao M."/>
            <person name="Ohmori Y."/>
            <person name="Kawabata A."/>
            <person name="Hikiji T."/>
            <person name="Kobatake N."/>
            <person name="Inagaki H."/>
            <person name="Ikema Y."/>
            <person name="Okamoto S."/>
            <person name="Okitani R."/>
            <person name="Kawakami T."/>
            <person name="Noguchi S."/>
            <person name="Itoh T."/>
            <person name="Shigeta K."/>
            <person name="Senba T."/>
            <person name="Matsumura K."/>
            <person name="Nakajima Y."/>
            <person name="Mizuno T."/>
            <person name="Morinaga M."/>
            <person name="Sasaki M."/>
            <person name="Togashi T."/>
            <person name="Oyama M."/>
            <person name="Hata H."/>
            <person name="Watanabe M."/>
            <person name="Komatsu T."/>
            <person name="Mizushima-Sugano J."/>
            <person name="Satoh T."/>
            <person name="Shirai Y."/>
            <person name="Takahashi Y."/>
            <person name="Nakagawa K."/>
            <person name="Okumura K."/>
            <person name="Nagase T."/>
            <person name="Nomura N."/>
            <person name="Kikuchi H."/>
            <person name="Masuho Y."/>
            <person name="Yamashita R."/>
            <person name="Nakai K."/>
            <person name="Yada T."/>
            <person name="Nakamura Y."/>
            <person name="Ohara O."/>
            <person name="Isogai T."/>
            <person name="Sugano S."/>
        </authorList>
    </citation>
    <scope>NUCLEOTIDE SEQUENCE [LARGE SCALE MRNA] (ISOFORM 2)</scope>
    <source>
        <tissue>Testis</tissue>
    </source>
</reference>
<reference key="3">
    <citation type="journal article" date="2006" name="Nature">
        <title>The finished DNA sequence of human chromosome 12.</title>
        <authorList>
            <person name="Scherer S.E."/>
            <person name="Muzny D.M."/>
            <person name="Buhay C.J."/>
            <person name="Chen R."/>
            <person name="Cree A."/>
            <person name="Ding Y."/>
            <person name="Dugan-Rocha S."/>
            <person name="Gill R."/>
            <person name="Gunaratne P."/>
            <person name="Harris R.A."/>
            <person name="Hawes A.C."/>
            <person name="Hernandez J."/>
            <person name="Hodgson A.V."/>
            <person name="Hume J."/>
            <person name="Jackson A."/>
            <person name="Khan Z.M."/>
            <person name="Kovar-Smith C."/>
            <person name="Lewis L.R."/>
            <person name="Lozado R.J."/>
            <person name="Metzker M.L."/>
            <person name="Milosavljevic A."/>
            <person name="Miner G.R."/>
            <person name="Montgomery K.T."/>
            <person name="Morgan M.B."/>
            <person name="Nazareth L.V."/>
            <person name="Scott G."/>
            <person name="Sodergren E."/>
            <person name="Song X.-Z."/>
            <person name="Steffen D."/>
            <person name="Lovering R.C."/>
            <person name="Wheeler D.A."/>
            <person name="Worley K.C."/>
            <person name="Yuan Y."/>
            <person name="Zhang Z."/>
            <person name="Adams C.Q."/>
            <person name="Ansari-Lari M.A."/>
            <person name="Ayele M."/>
            <person name="Brown M.J."/>
            <person name="Chen G."/>
            <person name="Chen Z."/>
            <person name="Clerc-Blankenburg K.P."/>
            <person name="Davis C."/>
            <person name="Delgado O."/>
            <person name="Dinh H.H."/>
            <person name="Draper H."/>
            <person name="Gonzalez-Garay M.L."/>
            <person name="Havlak P."/>
            <person name="Jackson L.R."/>
            <person name="Jacob L.S."/>
            <person name="Kelly S.H."/>
            <person name="Li L."/>
            <person name="Li Z."/>
            <person name="Liu J."/>
            <person name="Liu W."/>
            <person name="Lu J."/>
            <person name="Maheshwari M."/>
            <person name="Nguyen B.-V."/>
            <person name="Okwuonu G.O."/>
            <person name="Pasternak S."/>
            <person name="Perez L.M."/>
            <person name="Plopper F.J.H."/>
            <person name="Santibanez J."/>
            <person name="Shen H."/>
            <person name="Tabor P.E."/>
            <person name="Verduzco D."/>
            <person name="Waldron L."/>
            <person name="Wang Q."/>
            <person name="Williams G.A."/>
            <person name="Zhang J."/>
            <person name="Zhou J."/>
            <person name="Allen C.C."/>
            <person name="Amin A.G."/>
            <person name="Anyalebechi V."/>
            <person name="Bailey M."/>
            <person name="Barbaria J.A."/>
            <person name="Bimage K.E."/>
            <person name="Bryant N.P."/>
            <person name="Burch P.E."/>
            <person name="Burkett C.E."/>
            <person name="Burrell K.L."/>
            <person name="Calderon E."/>
            <person name="Cardenas V."/>
            <person name="Carter K."/>
            <person name="Casias K."/>
            <person name="Cavazos I."/>
            <person name="Cavazos S.R."/>
            <person name="Ceasar H."/>
            <person name="Chacko J."/>
            <person name="Chan S.N."/>
            <person name="Chavez D."/>
            <person name="Christopoulos C."/>
            <person name="Chu J."/>
            <person name="Cockrell R."/>
            <person name="Cox C.D."/>
            <person name="Dang M."/>
            <person name="Dathorne S.R."/>
            <person name="David R."/>
            <person name="Davis C.M."/>
            <person name="Davy-Carroll L."/>
            <person name="Deshazo D.R."/>
            <person name="Donlin J.E."/>
            <person name="D'Souza L."/>
            <person name="Eaves K.A."/>
            <person name="Egan A."/>
            <person name="Emery-Cohen A.J."/>
            <person name="Escotto M."/>
            <person name="Flagg N."/>
            <person name="Forbes L.D."/>
            <person name="Gabisi A.M."/>
            <person name="Garza M."/>
            <person name="Hamilton C."/>
            <person name="Henderson N."/>
            <person name="Hernandez O."/>
            <person name="Hines S."/>
            <person name="Hogues M.E."/>
            <person name="Huang M."/>
            <person name="Idlebird D.G."/>
            <person name="Johnson R."/>
            <person name="Jolivet A."/>
            <person name="Jones S."/>
            <person name="Kagan R."/>
            <person name="King L.M."/>
            <person name="Leal B."/>
            <person name="Lebow H."/>
            <person name="Lee S."/>
            <person name="LeVan J.M."/>
            <person name="Lewis L.C."/>
            <person name="London P."/>
            <person name="Lorensuhewa L.M."/>
            <person name="Loulseged H."/>
            <person name="Lovett D.A."/>
            <person name="Lucier A."/>
            <person name="Lucier R.L."/>
            <person name="Ma J."/>
            <person name="Madu R.C."/>
            <person name="Mapua P."/>
            <person name="Martindale A.D."/>
            <person name="Martinez E."/>
            <person name="Massey E."/>
            <person name="Mawhiney S."/>
            <person name="Meador M.G."/>
            <person name="Mendez S."/>
            <person name="Mercado C."/>
            <person name="Mercado I.C."/>
            <person name="Merritt C.E."/>
            <person name="Miner Z.L."/>
            <person name="Minja E."/>
            <person name="Mitchell T."/>
            <person name="Mohabbat F."/>
            <person name="Mohabbat K."/>
            <person name="Montgomery B."/>
            <person name="Moore N."/>
            <person name="Morris S."/>
            <person name="Munidasa M."/>
            <person name="Ngo R.N."/>
            <person name="Nguyen N.B."/>
            <person name="Nickerson E."/>
            <person name="Nwaokelemeh O.O."/>
            <person name="Nwokenkwo S."/>
            <person name="Obregon M."/>
            <person name="Oguh M."/>
            <person name="Oragunye N."/>
            <person name="Oviedo R.J."/>
            <person name="Parish B.J."/>
            <person name="Parker D.N."/>
            <person name="Parrish J."/>
            <person name="Parks K.L."/>
            <person name="Paul H.A."/>
            <person name="Payton B.A."/>
            <person name="Perez A."/>
            <person name="Perrin W."/>
            <person name="Pickens A."/>
            <person name="Primus E.L."/>
            <person name="Pu L.-L."/>
            <person name="Puazo M."/>
            <person name="Quiles M.M."/>
            <person name="Quiroz J.B."/>
            <person name="Rabata D."/>
            <person name="Reeves K."/>
            <person name="Ruiz S.J."/>
            <person name="Shao H."/>
            <person name="Sisson I."/>
            <person name="Sonaike T."/>
            <person name="Sorelle R.P."/>
            <person name="Sutton A.E."/>
            <person name="Svatek A.F."/>
            <person name="Svetz L.A."/>
            <person name="Tamerisa K.S."/>
            <person name="Taylor T.R."/>
            <person name="Teague B."/>
            <person name="Thomas N."/>
            <person name="Thorn R.D."/>
            <person name="Trejos Z.Y."/>
            <person name="Trevino B.K."/>
            <person name="Ukegbu O.N."/>
            <person name="Urban J.B."/>
            <person name="Vasquez L.I."/>
            <person name="Vera V.A."/>
            <person name="Villasana D.M."/>
            <person name="Wang L."/>
            <person name="Ward-Moore S."/>
            <person name="Warren J.T."/>
            <person name="Wei X."/>
            <person name="White F."/>
            <person name="Williamson A.L."/>
            <person name="Wleczyk R."/>
            <person name="Wooden H.S."/>
            <person name="Wooden S.H."/>
            <person name="Yen J."/>
            <person name="Yoon L."/>
            <person name="Yoon V."/>
            <person name="Zorrilla S.E."/>
            <person name="Nelson D."/>
            <person name="Kucherlapati R."/>
            <person name="Weinstock G."/>
            <person name="Gibbs R.A."/>
        </authorList>
    </citation>
    <scope>NUCLEOTIDE SEQUENCE [LARGE SCALE GENOMIC DNA]</scope>
</reference>
<reference key="4">
    <citation type="journal article" date="2001" name="J. Cell Sci.">
        <title>Signal recognition particle protein 19 is imported into the nucleus by importin 8 (RanBP8) and transportin.</title>
        <authorList>
            <person name="Dean K.A."/>
            <person name="von Ahsen O."/>
            <person name="Goerlich D."/>
            <person name="Fried H.M."/>
        </authorList>
    </citation>
    <scope>FUNCTION</scope>
    <scope>INTERACTION WITH RPL23A AND SRP19</scope>
</reference>
<reference key="5">
    <citation type="journal article" date="2008" name="Mol. Cell">
        <title>Kinase-selective enrichment enables quantitative phosphoproteomics of the kinome across the cell cycle.</title>
        <authorList>
            <person name="Daub H."/>
            <person name="Olsen J.V."/>
            <person name="Bairlein M."/>
            <person name="Gnad F."/>
            <person name="Oppermann F.S."/>
            <person name="Korner R."/>
            <person name="Greff Z."/>
            <person name="Keri G."/>
            <person name="Stemmann O."/>
            <person name="Mann M."/>
        </authorList>
    </citation>
    <scope>IDENTIFICATION BY MASS SPECTROMETRY [LARGE SCALE ANALYSIS]</scope>
    <source>
        <tissue>Cervix carcinoma</tissue>
    </source>
</reference>
<reference key="6">
    <citation type="journal article" date="2008" name="Proc. Natl. Acad. Sci. U.S.A.">
        <title>A quantitative atlas of mitotic phosphorylation.</title>
        <authorList>
            <person name="Dephoure N."/>
            <person name="Zhou C."/>
            <person name="Villen J."/>
            <person name="Beausoleil S.A."/>
            <person name="Bakalarski C.E."/>
            <person name="Elledge S.J."/>
            <person name="Gygi S.P."/>
        </authorList>
    </citation>
    <scope>PHOSPHORYLATION [LARGE SCALE ANALYSIS] AT SER-902 AND SER-903</scope>
    <scope>IDENTIFICATION BY MASS SPECTROMETRY [LARGE SCALE ANALYSIS]</scope>
    <source>
        <tissue>Cervix carcinoma</tissue>
    </source>
</reference>
<reference key="7">
    <citation type="journal article" date="2009" name="Sci. Signal.">
        <title>Quantitative phosphoproteomic analysis of T cell receptor signaling reveals system-wide modulation of protein-protein interactions.</title>
        <authorList>
            <person name="Mayya V."/>
            <person name="Lundgren D.H."/>
            <person name="Hwang S.-I."/>
            <person name="Rezaul K."/>
            <person name="Wu L."/>
            <person name="Eng J.K."/>
            <person name="Rodionov V."/>
            <person name="Han D.K."/>
        </authorList>
    </citation>
    <scope>PHOSPHORYLATION [LARGE SCALE ANALYSIS] AT SER-902 AND SER-903</scope>
    <scope>IDENTIFICATION BY MASS SPECTROMETRY [LARGE SCALE ANALYSIS]</scope>
    <source>
        <tissue>Leukemic T-cell</tissue>
    </source>
</reference>
<reference key="8">
    <citation type="journal article" date="2011" name="BMC Syst. Biol.">
        <title>Initial characterization of the human central proteome.</title>
        <authorList>
            <person name="Burkard T.R."/>
            <person name="Planyavsky M."/>
            <person name="Kaupe I."/>
            <person name="Breitwieser F.P."/>
            <person name="Buerckstuemmer T."/>
            <person name="Bennett K.L."/>
            <person name="Superti-Furga G."/>
            <person name="Colinge J."/>
        </authorList>
    </citation>
    <scope>IDENTIFICATION BY MASS SPECTROMETRY [LARGE SCALE ANALYSIS]</scope>
</reference>
<reference key="9">
    <citation type="journal article" date="2011" name="Sci. Signal.">
        <title>System-wide temporal characterization of the proteome and phosphoproteome of human embryonic stem cell differentiation.</title>
        <authorList>
            <person name="Rigbolt K.T."/>
            <person name="Prokhorova T.A."/>
            <person name="Akimov V."/>
            <person name="Henningsen J."/>
            <person name="Johansen P.T."/>
            <person name="Kratchmarova I."/>
            <person name="Kassem M."/>
            <person name="Mann M."/>
            <person name="Olsen J.V."/>
            <person name="Blagoev B."/>
        </authorList>
    </citation>
    <scope>PHOSPHORYLATION [LARGE SCALE ANALYSIS] AT SER-902 AND SER-903</scope>
    <scope>IDENTIFICATION BY MASS SPECTROMETRY [LARGE SCALE ANALYSIS]</scope>
</reference>
<reference key="10">
    <citation type="journal article" date="2017" name="RNA">
        <title>A biochemical framework for eIF4E-dependent mRNA export and nuclear recycling of the export machinery.</title>
        <authorList>
            <person name="Volpon L."/>
            <person name="Culjkovic-Kraljacic B."/>
            <person name="Sohn H.S."/>
            <person name="Blanchet-Cohen A."/>
            <person name="Osborne M.J."/>
            <person name="Borden K.L.B."/>
        </authorList>
    </citation>
    <scope>INTERACTION WITH LRPPRC</scope>
</reference>
<reference key="11">
    <citation type="journal article" date="2021" name="Am. J. Hum. Genet.">
        <title>A human importin-beta-related disorder: Syndromic thoracic aortic aneurysm caused by bi-allelic loss-of-function variants in IPO8.</title>
        <authorList>
            <consortium name="Genomics England Research Consortium"/>
            <person name="Van Gucht I."/>
            <person name="Meester J.A.N."/>
            <person name="Bento J.R."/>
            <person name="Bastiaansen M."/>
            <person name="Bastianen J."/>
            <person name="Luyckx I."/>
            <person name="Van Den Heuvel L."/>
            <person name="Neutel C.H.G."/>
            <person name="Guns P.J."/>
            <person name="Vermont M."/>
            <person name="Fransen E."/>
            <person name="Perik M.H.A.M."/>
            <person name="Velchev J.D."/>
            <person name="Alaerts M."/>
            <person name="Schepers D."/>
            <person name="Peeters S."/>
            <person name="Pintelon I."/>
            <person name="Almesned A."/>
            <person name="Ferla M.P."/>
            <person name="Taylor J.C."/>
            <person name="Dallosso A.R."/>
            <person name="Williams M."/>
            <person name="Evans J."/>
            <person name="Rosenfeld J.A."/>
            <person name="Sluysmans T."/>
            <person name="Rodrigues D."/>
            <person name="Chikermane A."/>
            <person name="Bharmappanavara G."/>
            <person name="Vijayakumar K."/>
            <person name="Mottaghi Moghaddam Shahri H."/>
            <person name="Hashemi N."/>
            <person name="Torbati P.N."/>
            <person name="Toosi M.B."/>
            <person name="Al-Hassnan Z.N."/>
            <person name="Vogt J."/>
            <person name="Revencu N."/>
            <person name="Maystadt I."/>
            <person name="Miller E.M."/>
            <person name="Weaver K.N."/>
            <person name="Begtrup A."/>
            <person name="Houlden H."/>
            <person name="Murphy D."/>
            <person name="Maroofian R."/>
            <person name="Pagnamenta A.T."/>
            <person name="Van Laer L."/>
            <person name="Loeys B.L."/>
            <person name="Verstraeten A."/>
        </authorList>
    </citation>
    <scope>INVOLVEMENT IN VISS</scope>
    <scope>VARIANTS VISS 259-TRP--ASN-1037 DEL AND 474-ARG--ASN-1037 DEL</scope>
    <scope>CHARACTERIZATION OF VARIANT VISS 474-ARG--ASN-1037 DEL</scope>
</reference>
<reference key="12">
    <citation type="journal article" date="2021" name="Am. J. Hum. Genet.">
        <title>Bi-allelic variants in IPO8 cause a connective tissue disorder associated with cardiovascular defects, skeletal abnormalities, and immune dysregulation.</title>
        <authorList>
            <person name="Ziegler A."/>
            <person name="Duclaux-Loras R."/>
            <person name="Revenu C."/>
            <person name="Charbit-Henrion F."/>
            <person name="Begue B."/>
            <person name="Duroure K."/>
            <person name="Grimaud L."/>
            <person name="Guihot A.L."/>
            <person name="Desquiret-Dumas V."/>
            <person name="Zarhrate M."/>
            <person name="Cagnard N."/>
            <person name="Mas E."/>
            <person name="Breton A."/>
            <person name="Edouard T."/>
            <person name="Billon C."/>
            <person name="Frank M."/>
            <person name="Colin E."/>
            <person name="Lenaers G."/>
            <person name="Henrion D."/>
            <person name="Lyonnet S."/>
            <person name="Faivre L."/>
            <person name="Alembik Y."/>
            <person name="Philippe A."/>
            <person name="Moulin B."/>
            <person name="Reinstein E."/>
            <person name="Tzur S."/>
            <person name="Attali R."/>
            <person name="McGillivray G."/>
            <person name="White S.M."/>
            <person name="Gallacher L."/>
            <person name="Kutsche K."/>
            <person name="Schneeberger P."/>
            <person name="Girisha K.M."/>
            <person name="Nayak S.S."/>
            <person name="Pais L."/>
            <person name="Maroofian R."/>
            <person name="Rad A."/>
            <person name="Vona B."/>
            <person name="Karimiani E.G."/>
            <person name="Lekszas C."/>
            <person name="Haaf T."/>
            <person name="Martin L."/>
            <person name="Ruemmele F."/>
            <person name="Bonneau D."/>
            <person name="Cerf-Bensussan N."/>
            <person name="Del Bene F."/>
            <person name="Parlato M."/>
        </authorList>
    </citation>
    <scope>INVOLVEMENT IN VISS</scope>
    <scope>VARIANTS VISS 28-GLN--ASN-1037 DEL; ASN-88; 710-SER--ASN-1037 DEL; ARG-749; 803-ARG--ASN-1037 DEL AND TRP-834</scope>
    <scope>CHARACTERIZATION OF VARIANTS VISS 28-GLN--ASN-1037 DEL; ASN-88; ARG-749 AND TRP-834</scope>
</reference>
<reference key="13">
    <citation type="journal article" date="2021" name="Genet. Med.">
        <title>Combining exome/genome sequencing with data repository analysis reveals novel gene-disease associations for a wide range of genetic disorders.</title>
        <authorList>
            <person name="Bertoli-Avella A.M."/>
            <person name="Kandaswamy K.K."/>
            <person name="Khan S."/>
            <person name="Ordonez-Herrera N."/>
            <person name="Tripolszki K."/>
            <person name="Beetz C."/>
            <person name="Rocha M.E."/>
            <person name="Urzi A."/>
            <person name="Hotakainen R."/>
            <person name="Leubauer A."/>
            <person name="Al-Ali R."/>
            <person name="Karageorgou V."/>
            <person name="Moldovan O."/>
            <person name="Dias P."/>
            <person name="Alhashem A."/>
            <person name="Tabarki B."/>
            <person name="Albalwi M.A."/>
            <person name="Alswaid A.F."/>
            <person name="Al-Hassnan Z.N."/>
            <person name="Alghamdi M.A."/>
            <person name="Hadipour Z."/>
            <person name="Hadipour F."/>
            <person name="Al Hashmi N."/>
            <person name="Al-Gazali L."/>
            <person name="Cheema H."/>
            <person name="Zaki M.S."/>
            <person name="Huening I."/>
            <person name="Alfares A."/>
            <person name="Eyaid W."/>
            <person name="Al Mutairi F."/>
            <person name="Alfadhel M."/>
            <person name="Alkuraya F.S."/>
            <person name="Al-Sannaa N.A."/>
            <person name="AlShamsi A.M."/>
            <person name="Ameziane N."/>
            <person name="Rolfs A."/>
            <person name="Bauer P."/>
        </authorList>
    </citation>
    <scope>INVOLVEMENT IN VISS</scope>
    <scope>VARIANTS VISS 234-ARG--ASN-1037 DEL; 259-TRP--ASN-1037 DEL; CYS-317 AND 645-GLN--ASN-1037 DEL</scope>
</reference>
<feature type="chain" id="PRO_0000120752" description="Importin-8">
    <location>
        <begin position="1"/>
        <end position="1037"/>
    </location>
</feature>
<feature type="domain" description="Importin N-terminal" evidence="2">
    <location>
        <begin position="22"/>
        <end position="102"/>
    </location>
</feature>
<feature type="region of interest" description="Disordered" evidence="3">
    <location>
        <begin position="886"/>
        <end position="934"/>
    </location>
</feature>
<feature type="compositionally biased region" description="Basic and acidic residues" evidence="3">
    <location>
        <begin position="886"/>
        <end position="895"/>
    </location>
</feature>
<feature type="compositionally biased region" description="Acidic residues" evidence="3">
    <location>
        <begin position="896"/>
        <end position="908"/>
    </location>
</feature>
<feature type="compositionally biased region" description="Polar residues" evidence="3">
    <location>
        <begin position="909"/>
        <end position="920"/>
    </location>
</feature>
<feature type="compositionally biased region" description="Acidic residues" evidence="3">
    <location>
        <begin position="923"/>
        <end position="934"/>
    </location>
</feature>
<feature type="modified residue" description="Phosphoserine" evidence="13 14 15">
    <location>
        <position position="902"/>
    </location>
</feature>
<feature type="modified residue" description="Phosphoserine" evidence="13 14 15">
    <location>
        <position position="903"/>
    </location>
</feature>
<feature type="splice variant" id="VSP_042574" description="In isoform 2." evidence="10">
    <original>MDLNRIIQALKGTIDPKLRIAAENELNQSYKIINFAPSLLRIIVSDHVEFPVRQAAAIYLKNMVTQYWPDREPPPGEAIFPFNIHENDRQQIRDNIVEGIIRSPDLVRVQLTMCLRAIIKHDFPGHWPGVVDKIDYYLQSQSSASWLGSLLCLYQLVKTYEYKKAEEREPLIIAMQIFLPRIQQQIVQLLPDSSYYSVLLQKQILKIFYALVQ</original>
    <variation>MESLTLKG</variation>
    <location>
        <begin position="1"/>
        <end position="213"/>
    </location>
</feature>
<feature type="sequence variant" id="VAR_055118" description="In dbSNP:rs1054423." evidence="9">
    <original>I</original>
    <variation>F</variation>
    <location>
        <position position="6"/>
    </location>
</feature>
<feature type="sequence variant" id="VAR_086233" description="In VISS; undetectable protein levels in either patient's fibroblasts or patient's Epstein-Barr virus-immortalized B cell lines." evidence="7">
    <location>
        <begin position="28"/>
        <end position="1037"/>
    </location>
</feature>
<feature type="sequence variant" id="VAR_086234" description="In VISS; very low protein expression levels, if any, in either patient's fibroblasts or patient's Epstein-Barr virus-immortalized B cell lines; dbSNP:rs1234764565." evidence="7">
    <original>D</original>
    <variation>N</variation>
    <location>
        <position position="88"/>
    </location>
</feature>
<feature type="sequence variant" id="VAR_086235" description="In VISS." evidence="6">
    <location>
        <begin position="234"/>
        <end position="1037"/>
    </location>
</feature>
<feature type="sequence variant" id="VAR_086236" description="In VISS." evidence="6 8">
    <location>
        <begin position="259"/>
        <end position="1037"/>
    </location>
</feature>
<feature type="sequence variant" id="VAR_086237" description="In VISS; uncertain significance; dbSNP:rs2136159064." evidence="6">
    <original>Y</original>
    <variation>C</variation>
    <location>
        <position position="317"/>
    </location>
</feature>
<feature type="sequence variant" id="VAR_086238" description="In VISS; undetectable protein levels in patient's fibroblasts, although mRNA levels seem unaffected." evidence="8">
    <location>
        <begin position="474"/>
        <end position="1037"/>
    </location>
</feature>
<feature type="sequence variant" id="VAR_055119" description="In dbSNP:rs34119940.">
    <original>I</original>
    <variation>V</variation>
    <location>
        <position position="640"/>
    </location>
</feature>
<feature type="sequence variant" id="VAR_086239" description="In VISS." evidence="6">
    <location>
        <begin position="645"/>
        <end position="1037"/>
    </location>
</feature>
<feature type="sequence variant" id="VAR_086240" description="In VISS." evidence="7">
    <location>
        <begin position="710"/>
        <end position="1037"/>
    </location>
</feature>
<feature type="sequence variant" id="VAR_086241" description="In VISS; undetectable protein expression levels in either patient's fibroblasts or patient's Epstein-Barr virus-immortalized B cell lines; dbSNP:rs2136136946." evidence="7">
    <original>C</original>
    <variation>R</variation>
    <location>
        <position position="749"/>
    </location>
</feature>
<feature type="sequence variant" id="VAR_086242" description="In VISS." evidence="7">
    <location>
        <begin position="803"/>
        <end position="1037"/>
    </location>
</feature>
<feature type="sequence variant" id="VAR_086243" description="In VISS; very low protein expression levels, if any, in either patient's fibroblasts or patient's Epstein-Barr virus-immortalized B cell lines; dbSNP:rs1425433912." evidence="7">
    <original>R</original>
    <variation>W</variation>
    <location>
        <position position="834"/>
    </location>
</feature>
<feature type="sequence conflict" description="In Ref. 1; AAB67052." evidence="11" ref="1">
    <original>Q</original>
    <variation>R</variation>
    <location>
        <position position="91"/>
    </location>
</feature>
<feature type="sequence conflict" description="In Ref. 1; AAB67052." evidence="11" ref="1">
    <original>P</original>
    <variation>A</variation>
    <location>
        <position position="279"/>
    </location>
</feature>
<dbReference type="EMBL" id="U77494">
    <property type="protein sequence ID" value="AAB67052.1"/>
    <property type="molecule type" value="mRNA"/>
</dbReference>
<dbReference type="EMBL" id="AK302260">
    <property type="protein sequence ID" value="BAH13659.1"/>
    <property type="molecule type" value="mRNA"/>
</dbReference>
<dbReference type="EMBL" id="AC012673">
    <property type="status" value="NOT_ANNOTATED_CDS"/>
    <property type="molecule type" value="Genomic_DNA"/>
</dbReference>
<dbReference type="EMBL" id="AC023426">
    <property type="status" value="NOT_ANNOTATED_CDS"/>
    <property type="molecule type" value="Genomic_DNA"/>
</dbReference>
<dbReference type="CCDS" id="CCDS53773.1">
    <molecule id="O15397-2"/>
</dbReference>
<dbReference type="CCDS" id="CCDS8719.1">
    <molecule id="O15397-1"/>
</dbReference>
<dbReference type="RefSeq" id="NP_001177924.1">
    <molecule id="O15397-2"/>
    <property type="nucleotide sequence ID" value="NM_001190995.2"/>
</dbReference>
<dbReference type="RefSeq" id="NP_006381.2">
    <molecule id="O15397-1"/>
    <property type="nucleotide sequence ID" value="NM_006390.3"/>
</dbReference>
<dbReference type="SMR" id="O15397"/>
<dbReference type="BioGRID" id="115781">
    <property type="interactions" value="235"/>
</dbReference>
<dbReference type="CORUM" id="O15397"/>
<dbReference type="DIP" id="DIP-44186N"/>
<dbReference type="FunCoup" id="O15397">
    <property type="interactions" value="4807"/>
</dbReference>
<dbReference type="IntAct" id="O15397">
    <property type="interactions" value="174"/>
</dbReference>
<dbReference type="MINT" id="O15397"/>
<dbReference type="STRING" id="9606.ENSP00000256079"/>
<dbReference type="TCDB" id="1.I.1.1.3">
    <property type="family name" value="the nuclear pore complex (npc) family"/>
</dbReference>
<dbReference type="GlyGen" id="O15397">
    <property type="glycosylation" value="1 site, 1 O-linked glycan (1 site)"/>
</dbReference>
<dbReference type="iPTMnet" id="O15397"/>
<dbReference type="PhosphoSitePlus" id="O15397"/>
<dbReference type="BioMuta" id="IPO8"/>
<dbReference type="jPOST" id="O15397"/>
<dbReference type="MassIVE" id="O15397"/>
<dbReference type="PaxDb" id="9606-ENSP00000256079"/>
<dbReference type="PeptideAtlas" id="O15397"/>
<dbReference type="ProteomicsDB" id="48636">
    <molecule id="O15397-1"/>
</dbReference>
<dbReference type="ProteomicsDB" id="48637">
    <molecule id="O15397-2"/>
</dbReference>
<dbReference type="Pumba" id="O15397"/>
<dbReference type="Antibodypedia" id="12794">
    <property type="antibodies" value="137 antibodies from 29 providers"/>
</dbReference>
<dbReference type="DNASU" id="10526"/>
<dbReference type="Ensembl" id="ENST00000256079.9">
    <molecule id="O15397-1"/>
    <property type="protein sequence ID" value="ENSP00000256079.4"/>
    <property type="gene ID" value="ENSG00000133704.10"/>
</dbReference>
<dbReference type="Ensembl" id="ENST00000544829.5">
    <molecule id="O15397-2"/>
    <property type="protein sequence ID" value="ENSP00000444520.1"/>
    <property type="gene ID" value="ENSG00000133704.10"/>
</dbReference>
<dbReference type="GeneID" id="10526"/>
<dbReference type="KEGG" id="hsa:10526"/>
<dbReference type="MANE-Select" id="ENST00000256079.9">
    <property type="protein sequence ID" value="ENSP00000256079.4"/>
    <property type="RefSeq nucleotide sequence ID" value="NM_006390.4"/>
    <property type="RefSeq protein sequence ID" value="NP_006381.2"/>
</dbReference>
<dbReference type="UCSC" id="uc001rjd.4">
    <molecule id="O15397-1"/>
    <property type="organism name" value="human"/>
</dbReference>
<dbReference type="AGR" id="HGNC:9853"/>
<dbReference type="CTD" id="10526"/>
<dbReference type="DisGeNET" id="10526"/>
<dbReference type="GeneCards" id="IPO8"/>
<dbReference type="GeneReviews" id="IPO8"/>
<dbReference type="HGNC" id="HGNC:9853">
    <property type="gene designation" value="IPO8"/>
</dbReference>
<dbReference type="HPA" id="ENSG00000133704">
    <property type="expression patterns" value="Low tissue specificity"/>
</dbReference>
<dbReference type="MalaCards" id="IPO8"/>
<dbReference type="MIM" id="605600">
    <property type="type" value="gene"/>
</dbReference>
<dbReference type="MIM" id="619472">
    <property type="type" value="phenotype"/>
</dbReference>
<dbReference type="neXtProt" id="NX_O15397"/>
<dbReference type="OpenTargets" id="ENSG00000133704"/>
<dbReference type="Orphanet" id="60030">
    <property type="disease" value="Loeys-Dietz syndrome"/>
</dbReference>
<dbReference type="PharmGKB" id="PA34214"/>
<dbReference type="VEuPathDB" id="HostDB:ENSG00000133704"/>
<dbReference type="eggNOG" id="KOG1991">
    <property type="taxonomic scope" value="Eukaryota"/>
</dbReference>
<dbReference type="GeneTree" id="ENSGT00940000158848"/>
<dbReference type="HOGENOM" id="CLU_004196_1_1_1"/>
<dbReference type="InParanoid" id="O15397"/>
<dbReference type="OMA" id="KNFEYRS"/>
<dbReference type="OrthoDB" id="760868at2759"/>
<dbReference type="PAN-GO" id="O15397">
    <property type="GO annotations" value="3 GO annotations based on evolutionary models"/>
</dbReference>
<dbReference type="PhylomeDB" id="O15397"/>
<dbReference type="TreeFam" id="TF300634"/>
<dbReference type="PathwayCommons" id="O15397"/>
<dbReference type="Reactome" id="R-HSA-5578749">
    <property type="pathway name" value="Transcriptional regulation by small RNAs"/>
</dbReference>
<dbReference type="SignaLink" id="O15397"/>
<dbReference type="BioGRID-ORCS" id="10526">
    <property type="hits" value="17 hits in 1160 CRISPR screens"/>
</dbReference>
<dbReference type="CD-CODE" id="DEE660B4">
    <property type="entry name" value="Stress granule"/>
</dbReference>
<dbReference type="ChiTaRS" id="IPO8">
    <property type="organism name" value="human"/>
</dbReference>
<dbReference type="GenomeRNAi" id="10526"/>
<dbReference type="Pharos" id="O15397">
    <property type="development level" value="Tbio"/>
</dbReference>
<dbReference type="PRO" id="PR:O15397"/>
<dbReference type="Proteomes" id="UP000005640">
    <property type="component" value="Chromosome 12"/>
</dbReference>
<dbReference type="RNAct" id="O15397">
    <property type="molecule type" value="protein"/>
</dbReference>
<dbReference type="Bgee" id="ENSG00000133704">
    <property type="expression patterns" value="Expressed in secondary oocyte and 188 other cell types or tissues"/>
</dbReference>
<dbReference type="ExpressionAtlas" id="O15397">
    <property type="expression patterns" value="baseline and differential"/>
</dbReference>
<dbReference type="GO" id="GO:0005829">
    <property type="term" value="C:cytosol"/>
    <property type="evidence" value="ECO:0000318"/>
    <property type="project" value="GO_Central"/>
</dbReference>
<dbReference type="GO" id="GO:0005635">
    <property type="term" value="C:nuclear envelope"/>
    <property type="evidence" value="ECO:0000318"/>
    <property type="project" value="GO_Central"/>
</dbReference>
<dbReference type="GO" id="GO:0005654">
    <property type="term" value="C:nucleoplasm"/>
    <property type="evidence" value="ECO:0000304"/>
    <property type="project" value="Reactome"/>
</dbReference>
<dbReference type="GO" id="GO:0031267">
    <property type="term" value="F:small GTPase binding"/>
    <property type="evidence" value="ECO:0000304"/>
    <property type="project" value="ProtInc"/>
</dbReference>
<dbReference type="GO" id="GO:0006606">
    <property type="term" value="P:protein import into nucleus"/>
    <property type="evidence" value="ECO:0000318"/>
    <property type="project" value="GO_Central"/>
</dbReference>
<dbReference type="GO" id="GO:0007165">
    <property type="term" value="P:signal transduction"/>
    <property type="evidence" value="ECO:0000304"/>
    <property type="project" value="ProtInc"/>
</dbReference>
<dbReference type="FunFam" id="1.25.10.10:FF:000053">
    <property type="entry name" value="Importin 7"/>
    <property type="match status" value="1"/>
</dbReference>
<dbReference type="Gene3D" id="1.25.10.10">
    <property type="entry name" value="Leucine-rich Repeat Variant"/>
    <property type="match status" value="1"/>
</dbReference>
<dbReference type="InterPro" id="IPR011989">
    <property type="entry name" value="ARM-like"/>
</dbReference>
<dbReference type="InterPro" id="IPR016024">
    <property type="entry name" value="ARM-type_fold"/>
</dbReference>
<dbReference type="InterPro" id="IPR001494">
    <property type="entry name" value="Importin-beta_N"/>
</dbReference>
<dbReference type="InterPro" id="IPR013713">
    <property type="entry name" value="XPO2_central"/>
</dbReference>
<dbReference type="PANTHER" id="PTHR10997">
    <property type="entry name" value="IMPORTIN-7, 8, 11"/>
    <property type="match status" value="1"/>
</dbReference>
<dbReference type="PANTHER" id="PTHR10997:SF26">
    <property type="entry name" value="IMPORTIN-8"/>
    <property type="match status" value="1"/>
</dbReference>
<dbReference type="Pfam" id="PF08506">
    <property type="entry name" value="Cse1"/>
    <property type="match status" value="1"/>
</dbReference>
<dbReference type="Pfam" id="PF03810">
    <property type="entry name" value="IBN_N"/>
    <property type="match status" value="1"/>
</dbReference>
<dbReference type="SMART" id="SM00913">
    <property type="entry name" value="IBN_N"/>
    <property type="match status" value="1"/>
</dbReference>
<dbReference type="SUPFAM" id="SSF48371">
    <property type="entry name" value="ARM repeat"/>
    <property type="match status" value="1"/>
</dbReference>
<dbReference type="PROSITE" id="PS50166">
    <property type="entry name" value="IMPORTIN_B_NT"/>
    <property type="match status" value="1"/>
</dbReference>
<protein>
    <recommendedName>
        <fullName>Importin-8</fullName>
        <shortName>Imp8</shortName>
    </recommendedName>
    <alternativeName>
        <fullName>Ran-binding protein 8</fullName>
        <shortName>RanBP8</shortName>
    </alternativeName>
</protein>
<proteinExistence type="evidence at protein level"/>
<keyword id="KW-0025">Alternative splicing</keyword>
<keyword id="KW-0993">Aortic aneurysm</keyword>
<keyword id="KW-0963">Cytoplasm</keyword>
<keyword id="KW-0225">Disease variant</keyword>
<keyword id="KW-0539">Nucleus</keyword>
<keyword id="KW-0597">Phosphoprotein</keyword>
<keyword id="KW-0653">Protein transport</keyword>
<keyword id="KW-1267">Proteomics identification</keyword>
<keyword id="KW-1185">Reference proteome</keyword>
<keyword id="KW-0813">Transport</keyword>
<accession>O15397</accession>
<accession>B7Z7M3</accession>
<comment type="function">
    <text evidence="4 9 12">Involved in nuclear protein import, either by acting as autonomous nuclear transport receptor or as an adapter-like protein in association with the importin-beta subunit KPNB1. Acting autonomously, may serve as receptor for nuclear localization signals (NLS) and promote translocation of import substrates through the nuclear pore complex (NPC) by an energy requiring, Ran-dependent mechanism. At the nucleoplasmic side of the NPC, Ran binds to importin, the importin/substrate complex dissociates and importin is re-exported from the nucleus to the cytoplasm where GTP hydrolysis releases Ran. The directionality of nuclear import is thought to be conferred by an asymmetric distribution of the GTP- and GDP-bound forms of Ran between the cytoplasm and nucleus (PubMed:9214382). In vitro mediates the nuclear import of the signal recognition particle protein SRP19 (PubMed:11682607). May also be involved in cytoplasm-to-nucleus shuttling of a broad spectrum of other cargos, including Argonaute-microRNAs complexes, the JUN protein, RELA/NF-kappa-B p65 subunit, the translation initiation factor EIF4E and a set of receptor-activated mothers against decapentaplegic homolog (SMAD) transcription factors that play a critical role downstream of the large family of transforming growth factor beta and bone morphogenetic protein (BMP) cytokines (Probable).</text>
</comment>
<comment type="subunit">
    <text evidence="4 5 9">Forms a heterodimer with KPNB1 (PubMed:9214382). Interacts with SRP19 (PubMed:11682607). Interacts with RPL23A (PubMed:11682607). Binds directly to nuclear pore complexes. Interacts with LRPPRC; the interaction occurs when LRPPRC is in its RNA-free form and promotes import of LRPPRC to the nucleus to allow for EIF4E-mediated export of mRNAS from the nucleus to the cytoplasm (PubMed:28325843).</text>
</comment>
<comment type="interaction">
    <interactant intactId="EBI-358808">
        <id>O15397</id>
    </interactant>
    <interactant intactId="EBI-527363">
        <id>Q9UL18</id>
        <label>AGO1</label>
    </interactant>
    <organismsDiffer>false</organismsDiffer>
    <experiments>2</experiments>
</comment>
<comment type="interaction">
    <interactant intactId="EBI-358808">
        <id>O15397</id>
    </interactant>
    <interactant intactId="EBI-528269">
        <id>Q9UKV8</id>
        <label>AGO2</label>
    </interactant>
    <organismsDiffer>false</organismsDiffer>
    <experiments>4</experiments>
</comment>
<comment type="interaction">
    <interactant intactId="EBI-358808">
        <id>O15397</id>
    </interactant>
    <interactant intactId="EBI-2267883">
        <id>Q9H9G7</id>
        <label>AGO3</label>
    </interactant>
    <organismsDiffer>false</organismsDiffer>
    <experiments>5</experiments>
</comment>
<comment type="interaction">
    <interactant intactId="EBI-358808">
        <id>O15397</id>
    </interactant>
    <interactant intactId="EBI-2269696">
        <id>Q9HCK5</id>
        <label>AGO4</label>
    </interactant>
    <organismsDiffer>false</organismsDiffer>
    <experiments>3</experiments>
</comment>
<comment type="interaction">
    <interactant intactId="EBI-358808">
        <id>O15397</id>
    </interactant>
    <interactant intactId="EBI-1567153">
        <id>Q15797</id>
        <label>SMAD1</label>
    </interactant>
    <organismsDiffer>false</organismsDiffer>
    <experiments>2</experiments>
</comment>
<comment type="interaction">
    <interactant intactId="EBI-358808">
        <id>O15397</id>
    </interactant>
    <interactant intactId="EBI-347161">
        <id>P84022</id>
        <label>SMAD3</label>
    </interactant>
    <organismsDiffer>false</organismsDiffer>
    <experiments>2</experiments>
</comment>
<comment type="interaction">
    <interactant intactId="EBI-358808">
        <id>O15397</id>
    </interactant>
    <interactant intactId="EBI-1048957">
        <id>P19532</id>
        <label>TFE3</label>
    </interactant>
    <organismsDiffer>false</organismsDiffer>
    <experiments>2</experiments>
</comment>
<comment type="interaction">
    <interactant intactId="EBI-358808">
        <id>O15397</id>
    </interactant>
    <interactant intactId="EBI-11745701">
        <id>P19544-6</id>
        <label>WT1</label>
    </interactant>
    <organismsDiffer>false</organismsDiffer>
    <experiments>3</experiments>
</comment>
<comment type="interaction">
    <interactant intactId="EBI-358808">
        <id>O15397</id>
    </interactant>
    <interactant intactId="EBI-7236323">
        <id>Q6ZN57</id>
        <label>ZFP2</label>
    </interactant>
    <organismsDiffer>false</organismsDiffer>
    <experiments>3</experiments>
</comment>
<comment type="interaction">
    <interactant intactId="EBI-358808">
        <id>O15397</id>
    </interactant>
    <interactant intactId="EBI-4395808">
        <id>O43296</id>
        <label>ZNF264</label>
    </interactant>
    <organismsDiffer>false</organismsDiffer>
    <experiments>3</experiments>
</comment>
<comment type="interaction">
    <interactant intactId="EBI-358808">
        <id>O15397</id>
    </interactant>
    <interactant intactId="EBI-1640372">
        <id>Q9NQX6</id>
        <label>ZNF331</label>
    </interactant>
    <organismsDiffer>false</organismsDiffer>
    <experiments>5</experiments>
</comment>
<comment type="interaction">
    <interactant intactId="EBI-358808">
        <id>O15397</id>
    </interactant>
    <interactant intactId="EBI-10251462">
        <id>Q6NX45</id>
        <label>ZNF774</label>
    </interactant>
    <organismsDiffer>false</organismsDiffer>
    <experiments>3</experiments>
</comment>
<comment type="subcellular location">
    <subcellularLocation>
        <location evidence="1">Cytoplasm</location>
    </subcellularLocation>
    <subcellularLocation>
        <location evidence="1">Nucleus</location>
    </subcellularLocation>
</comment>
<comment type="alternative products">
    <event type="alternative splicing"/>
    <isoform>
        <id>O15397-1</id>
        <name>1</name>
        <sequence type="displayed"/>
    </isoform>
    <isoform>
        <id>O15397-2</id>
        <name>2</name>
        <sequence type="described" ref="VSP_042574"/>
    </isoform>
</comment>
<comment type="disease" evidence="6 7 8">
    <disease id="DI-06191">
        <name>VISS syndrome</name>
        <acronym>VISS</acronym>
        <description>An autosomal recessive disease characterized by early-onset thoracic aortic aneurysm, aneurysm and tortuosity of other arteries, motor developmental delay, connective tissue findings such as joint hypermobility, skin laxity and hernias, and craniofacial dysmorphic features. Immune dysregulation has been reported in some patients.</description>
        <dbReference type="MIM" id="619472"/>
    </disease>
    <text>The disease is caused by variants affecting the gene represented in this entry.</text>
</comment>
<comment type="similarity">
    <text evidence="11">Belongs to the importin beta family.</text>
</comment>
<sequence length="1037" mass="119938">MDLNRIIQALKGTIDPKLRIAAENELNQSYKIINFAPSLLRIIVSDHVEFPVRQAAAIYLKNMVTQYWPDREPPPGEAIFPFNIHENDRQQIRDNIVEGIIRSPDLVRVQLTMCLRAIIKHDFPGHWPGVVDKIDYYLQSQSSASWLGSLLCLYQLVKTYEYKKAEEREPLIIAMQIFLPRIQQQIVQLLPDSSYYSVLLQKQILKIFYALVQYALPLQLVNNQTMTTWMEIFRTIIDRTVPPETLHIDEDDRPELVWWKCKKWALHIVARLFERYGSPGNVTKEYFEFSEFFLKTYAVGIQQVLLKILDQYRQKEYVAPRVLQQAFNYLNQGVVHSITWKQMKPHIQNISEDVIFSVMCYKDEDEELWQEDPYEYIRMKFDIFEDYASPTTAAQTLLYTAAKKRKEVLPKMMAFCYQILTDPNFDPRKKDGALHVIGSLAEILLKKSLFKDQMELFLQNHVFPLLLSNLGYLRARSCWVLHAFSSLKFHNELNLRNAVELAKKSLIEDKEMPVKVEAALALQSLISNQIQAKEYMKPHVRPIMQELLHIVRETENDDVTNVIQKMICEYSQEVASIAVDMTQHLAEIFGKVLQSDEYEEVEDKTVMAMGILHTIDTILTVVEDHKEITQQLENICLRIIDLVLQKHVIEFYEEILSLAYSLTCHSISPQMWQLLGILYEVFQQDCFEYFTDMMPLLHNYVTIDTDTLLSNAKHLEILFTMCRKVLCGDAGEDAECHAAKLLEVIILQCKGRGIDQCIPLFVQLVLERLTRGVKTSELRTMCLQVAIAALYYNPDLLLHTLERIQLPHNPGPITVQFINQWMNDTDCFLGHHDRKMCIIGLSILLELQNRPPAVDAVVGQIVPSILFLFLGLKQVCATRQLVNREDRSKAEKADMEENEEISSDEEETNVTAQAMQSNNGRGEDEEEEDDDWDEEVLEETALEGFSTPLDLDNSVDEYQFFTQALITVQSRDAAWYQLLMAPLSEDQRTALQEVYTLAEHRRTVAEAKKKIEQQGGFTFENKGVLSAFNFGTVPSNN</sequence>